<sequence>MSIRNIGIMAHIDAGKTTTTERIIYYTGKSHKMGDVDSGNTITDWMPQEQERGITISSAAITCHWKDCQINIIDTPGHVDFTAEVERSLRVLDGGIVIFSAVDGIQAQTETVWKQAEKYEIPRLAYVNKMDRIGADFFKVVGDIENKFKTIPLVLQIPIGNESNFEGVVDIILNKELHFSMENGIPKLTYSQIREEFIEKVILFKKKLIDILSQFSEEITQLFLEDKEIGLDIIKREIRRGTISRFIIPVLMGTSLKNIGIEPLIDSIVDYLPSPFEKSFSAFSLDTNKKILVDPNENKKLSALVFKVQYSSVIASHLYFVRVYSGEINPNKKIINASNGKREKFTKIFRVFSNKNEQIDFVKTGDIGAVLGLKFSVTGDTLVEENNNVLLEAVMFPEPVVLMSVEPERSSDEVRLKEIFEIISKEDPTFSYSESKETGQLIISGMGELHLEIILTRIKDEFNLNVYTGKPQVSYRESAGKIVKEVFEFNNIFAGKNIDFKIGMIIKPLSRGAGNKIDFECGIEPVIKSAILRGITSAFVSGIFGYPIIDINVSIFSIVCGANKISESAFESISGFAFHSIFQKSDPIRLEPIMLLEIRTPIEHTGEIISTLNVMGGVIHSVSNIGEYDLIKSEAAFEKLFGYASILRSSTKGRGSFTMEFSYFKEKLS</sequence>
<accession>O51634</accession>
<protein>
    <recommendedName>
        <fullName>Elongation factor G 2</fullName>
        <shortName>EF-G 2</shortName>
    </recommendedName>
</protein>
<comment type="function">
    <text evidence="1">Catalyzes the GTP-dependent ribosomal translocation step during translation elongation. During this step, the ribosome changes from the pre-translocational (PRE) to the post-translocational (POST) state as the newly formed A-site-bound peptidyl-tRNA and P-site-bound deacylated tRNA move to the P and E sites, respectively. Catalyzes the coordinated movement of the two tRNA molecules, the mRNA and conformational changes in the ribosome (By similarity).</text>
</comment>
<comment type="subcellular location">
    <subcellularLocation>
        <location evidence="1">Cytoplasm</location>
    </subcellularLocation>
</comment>
<comment type="similarity">
    <text evidence="2">Belongs to the TRAFAC class translation factor GTPase superfamily. Classic translation factor GTPase family. EF-G/EF-2 subfamily.</text>
</comment>
<proteinExistence type="inferred from homology"/>
<name>EFG2_BORBU</name>
<evidence type="ECO:0000250" key="1"/>
<evidence type="ECO:0000305" key="2"/>
<organism>
    <name type="scientific">Borreliella burgdorferi (strain ATCC 35210 / DSM 4680 / CIP 102532 / B31)</name>
    <name type="common">Borrelia burgdorferi</name>
    <dbReference type="NCBI Taxonomy" id="224326"/>
    <lineage>
        <taxon>Bacteria</taxon>
        <taxon>Pseudomonadati</taxon>
        <taxon>Spirochaetota</taxon>
        <taxon>Spirochaetia</taxon>
        <taxon>Spirochaetales</taxon>
        <taxon>Borreliaceae</taxon>
        <taxon>Borreliella</taxon>
    </lineage>
</organism>
<reference key="1">
    <citation type="journal article" date="1997" name="Nature">
        <title>Genomic sequence of a Lyme disease spirochaete, Borrelia burgdorferi.</title>
        <authorList>
            <person name="Fraser C.M."/>
            <person name="Casjens S."/>
            <person name="Huang W.M."/>
            <person name="Sutton G.G."/>
            <person name="Clayton R.A."/>
            <person name="Lathigra R."/>
            <person name="White O."/>
            <person name="Ketchum K.A."/>
            <person name="Dodson R.J."/>
            <person name="Hickey E.K."/>
            <person name="Gwinn M.L."/>
            <person name="Dougherty B.A."/>
            <person name="Tomb J.-F."/>
            <person name="Fleischmann R.D."/>
            <person name="Richardson D.L."/>
            <person name="Peterson J.D."/>
            <person name="Kerlavage A.R."/>
            <person name="Quackenbush J."/>
            <person name="Salzberg S.L."/>
            <person name="Hanson M."/>
            <person name="van Vugt R."/>
            <person name="Palmer N."/>
            <person name="Adams M.D."/>
            <person name="Gocayne J.D."/>
            <person name="Weidman J.F."/>
            <person name="Utterback T.R."/>
            <person name="Watthey L."/>
            <person name="McDonald L.A."/>
            <person name="Artiach P."/>
            <person name="Bowman C."/>
            <person name="Garland S.A."/>
            <person name="Fujii C."/>
            <person name="Cotton M.D."/>
            <person name="Horst K."/>
            <person name="Roberts K.M."/>
            <person name="Hatch B."/>
            <person name="Smith H.O."/>
            <person name="Venter J.C."/>
        </authorList>
    </citation>
    <scope>NUCLEOTIDE SEQUENCE [LARGE SCALE GENOMIC DNA]</scope>
    <source>
        <strain>ATCC 35210 / DSM 4680 / CIP 102532 / B31</strain>
    </source>
</reference>
<keyword id="KW-0963">Cytoplasm</keyword>
<keyword id="KW-0251">Elongation factor</keyword>
<keyword id="KW-0342">GTP-binding</keyword>
<keyword id="KW-0547">Nucleotide-binding</keyword>
<keyword id="KW-0648">Protein biosynthesis</keyword>
<keyword id="KW-1185">Reference proteome</keyword>
<gene>
    <name type="primary">fusB</name>
    <name type="synonym">fus2</name>
    <name type="ordered locus">BB_0691</name>
</gene>
<dbReference type="EMBL" id="AE000783">
    <property type="protein sequence ID" value="AAC67051.1"/>
    <property type="molecule type" value="Genomic_DNA"/>
</dbReference>
<dbReference type="PIR" id="B70186">
    <property type="entry name" value="B70186"/>
</dbReference>
<dbReference type="RefSeq" id="NP_212825.1">
    <property type="nucleotide sequence ID" value="NC_001318.1"/>
</dbReference>
<dbReference type="RefSeq" id="WP_010889801.1">
    <property type="nucleotide sequence ID" value="NC_001318.1"/>
</dbReference>
<dbReference type="SMR" id="O51634"/>
<dbReference type="STRING" id="224326.BB_0691"/>
<dbReference type="PaxDb" id="224326-BB_0691"/>
<dbReference type="EnsemblBacteria" id="AAC67051">
    <property type="protein sequence ID" value="AAC67051"/>
    <property type="gene ID" value="BB_0691"/>
</dbReference>
<dbReference type="KEGG" id="bbu:BB_0691"/>
<dbReference type="PATRIC" id="fig|224326.49.peg.1082"/>
<dbReference type="HOGENOM" id="CLU_002794_4_1_12"/>
<dbReference type="OrthoDB" id="9804431at2"/>
<dbReference type="Proteomes" id="UP000001807">
    <property type="component" value="Chromosome"/>
</dbReference>
<dbReference type="GO" id="GO:0005737">
    <property type="term" value="C:cytoplasm"/>
    <property type="evidence" value="ECO:0007669"/>
    <property type="project" value="UniProtKB-SubCell"/>
</dbReference>
<dbReference type="GO" id="GO:0005525">
    <property type="term" value="F:GTP binding"/>
    <property type="evidence" value="ECO:0007669"/>
    <property type="project" value="UniProtKB-UniRule"/>
</dbReference>
<dbReference type="GO" id="GO:0003924">
    <property type="term" value="F:GTPase activity"/>
    <property type="evidence" value="ECO:0007669"/>
    <property type="project" value="InterPro"/>
</dbReference>
<dbReference type="GO" id="GO:0003746">
    <property type="term" value="F:translation elongation factor activity"/>
    <property type="evidence" value="ECO:0007669"/>
    <property type="project" value="UniProtKB-UniRule"/>
</dbReference>
<dbReference type="GO" id="GO:0032790">
    <property type="term" value="P:ribosome disassembly"/>
    <property type="evidence" value="ECO:0007669"/>
    <property type="project" value="TreeGrafter"/>
</dbReference>
<dbReference type="CDD" id="cd01886">
    <property type="entry name" value="EF-G"/>
    <property type="match status" value="1"/>
</dbReference>
<dbReference type="CDD" id="cd16262">
    <property type="entry name" value="EFG_III"/>
    <property type="match status" value="1"/>
</dbReference>
<dbReference type="CDD" id="cd01680">
    <property type="entry name" value="EFG_like_IV"/>
    <property type="match status" value="1"/>
</dbReference>
<dbReference type="CDD" id="cd03713">
    <property type="entry name" value="EFG_mtEFG_C"/>
    <property type="match status" value="1"/>
</dbReference>
<dbReference type="CDD" id="cd04088">
    <property type="entry name" value="EFG_mtEFG_II"/>
    <property type="match status" value="1"/>
</dbReference>
<dbReference type="FunFam" id="3.30.70.240:FF:000001">
    <property type="entry name" value="Elongation factor G"/>
    <property type="match status" value="1"/>
</dbReference>
<dbReference type="FunFam" id="3.40.50.300:FF:000029">
    <property type="entry name" value="Elongation factor G"/>
    <property type="match status" value="1"/>
</dbReference>
<dbReference type="FunFam" id="3.30.70.870:FF:000002">
    <property type="entry name" value="Translation elongation factor 2"/>
    <property type="match status" value="1"/>
</dbReference>
<dbReference type="Gene3D" id="3.30.230.10">
    <property type="match status" value="1"/>
</dbReference>
<dbReference type="Gene3D" id="3.30.70.240">
    <property type="match status" value="1"/>
</dbReference>
<dbReference type="Gene3D" id="3.30.70.870">
    <property type="entry name" value="Elongation Factor G (Translational Gtpase), domain 3"/>
    <property type="match status" value="1"/>
</dbReference>
<dbReference type="Gene3D" id="3.40.50.300">
    <property type="entry name" value="P-loop containing nucleotide triphosphate hydrolases"/>
    <property type="match status" value="1"/>
</dbReference>
<dbReference type="Gene3D" id="2.40.30.10">
    <property type="entry name" value="Translation factors"/>
    <property type="match status" value="1"/>
</dbReference>
<dbReference type="HAMAP" id="MF_00054_B">
    <property type="entry name" value="EF_G_EF_2_B"/>
    <property type="match status" value="1"/>
</dbReference>
<dbReference type="InterPro" id="IPR053905">
    <property type="entry name" value="EF-G-like_DII"/>
</dbReference>
<dbReference type="InterPro" id="IPR041095">
    <property type="entry name" value="EFG_II"/>
</dbReference>
<dbReference type="InterPro" id="IPR009022">
    <property type="entry name" value="EFG_III"/>
</dbReference>
<dbReference type="InterPro" id="IPR035647">
    <property type="entry name" value="EFG_III/V"/>
</dbReference>
<dbReference type="InterPro" id="IPR035649">
    <property type="entry name" value="EFG_V"/>
</dbReference>
<dbReference type="InterPro" id="IPR000640">
    <property type="entry name" value="EFG_V-like"/>
</dbReference>
<dbReference type="InterPro" id="IPR031157">
    <property type="entry name" value="G_TR_CS"/>
</dbReference>
<dbReference type="InterPro" id="IPR027417">
    <property type="entry name" value="P-loop_NTPase"/>
</dbReference>
<dbReference type="InterPro" id="IPR020568">
    <property type="entry name" value="Ribosomal_Su5_D2-typ_SF"/>
</dbReference>
<dbReference type="InterPro" id="IPR014721">
    <property type="entry name" value="Ribsml_uS5_D2-typ_fold_subgr"/>
</dbReference>
<dbReference type="InterPro" id="IPR005225">
    <property type="entry name" value="Small_GTP-bd"/>
</dbReference>
<dbReference type="InterPro" id="IPR000795">
    <property type="entry name" value="T_Tr_GTP-bd_dom"/>
</dbReference>
<dbReference type="InterPro" id="IPR009000">
    <property type="entry name" value="Transl_B-barrel_sf"/>
</dbReference>
<dbReference type="InterPro" id="IPR004540">
    <property type="entry name" value="Transl_elong_EFG/EF2"/>
</dbReference>
<dbReference type="InterPro" id="IPR005517">
    <property type="entry name" value="Transl_elong_EFG/EF2_IV"/>
</dbReference>
<dbReference type="NCBIfam" id="TIGR00484">
    <property type="entry name" value="EF-G"/>
    <property type="match status" value="1"/>
</dbReference>
<dbReference type="NCBIfam" id="TIGR00231">
    <property type="entry name" value="small_GTP"/>
    <property type="match status" value="1"/>
</dbReference>
<dbReference type="PANTHER" id="PTHR43261:SF1">
    <property type="entry name" value="RIBOSOME-RELEASING FACTOR 2, MITOCHONDRIAL"/>
    <property type="match status" value="1"/>
</dbReference>
<dbReference type="PANTHER" id="PTHR43261">
    <property type="entry name" value="TRANSLATION ELONGATION FACTOR G-RELATED"/>
    <property type="match status" value="1"/>
</dbReference>
<dbReference type="Pfam" id="PF22042">
    <property type="entry name" value="EF-G_D2"/>
    <property type="match status" value="1"/>
</dbReference>
<dbReference type="Pfam" id="PF00679">
    <property type="entry name" value="EFG_C"/>
    <property type="match status" value="1"/>
</dbReference>
<dbReference type="Pfam" id="PF14492">
    <property type="entry name" value="EFG_III"/>
    <property type="match status" value="1"/>
</dbReference>
<dbReference type="Pfam" id="PF03764">
    <property type="entry name" value="EFG_IV"/>
    <property type="match status" value="1"/>
</dbReference>
<dbReference type="Pfam" id="PF00009">
    <property type="entry name" value="GTP_EFTU"/>
    <property type="match status" value="1"/>
</dbReference>
<dbReference type="PRINTS" id="PR00315">
    <property type="entry name" value="ELONGATNFCT"/>
</dbReference>
<dbReference type="SMART" id="SM00838">
    <property type="entry name" value="EFG_C"/>
    <property type="match status" value="1"/>
</dbReference>
<dbReference type="SMART" id="SM00889">
    <property type="entry name" value="EFG_IV"/>
    <property type="match status" value="1"/>
</dbReference>
<dbReference type="SUPFAM" id="SSF54980">
    <property type="entry name" value="EF-G C-terminal domain-like"/>
    <property type="match status" value="2"/>
</dbReference>
<dbReference type="SUPFAM" id="SSF52540">
    <property type="entry name" value="P-loop containing nucleoside triphosphate hydrolases"/>
    <property type="match status" value="1"/>
</dbReference>
<dbReference type="SUPFAM" id="SSF54211">
    <property type="entry name" value="Ribosomal protein S5 domain 2-like"/>
    <property type="match status" value="1"/>
</dbReference>
<dbReference type="SUPFAM" id="SSF50447">
    <property type="entry name" value="Translation proteins"/>
    <property type="match status" value="1"/>
</dbReference>
<dbReference type="PROSITE" id="PS00301">
    <property type="entry name" value="G_TR_1"/>
    <property type="match status" value="1"/>
</dbReference>
<dbReference type="PROSITE" id="PS51722">
    <property type="entry name" value="G_TR_2"/>
    <property type="match status" value="1"/>
</dbReference>
<feature type="chain" id="PRO_0000091081" description="Elongation factor G 2">
    <location>
        <begin position="1"/>
        <end position="669"/>
    </location>
</feature>
<feature type="domain" description="tr-type G">
    <location>
        <begin position="1"/>
        <end position="276"/>
    </location>
</feature>
<feature type="binding site" evidence="1">
    <location>
        <begin position="10"/>
        <end position="17"/>
    </location>
    <ligand>
        <name>GTP</name>
        <dbReference type="ChEBI" id="CHEBI:37565"/>
    </ligand>
</feature>
<feature type="binding site" evidence="1">
    <location>
        <begin position="74"/>
        <end position="78"/>
    </location>
    <ligand>
        <name>GTP</name>
        <dbReference type="ChEBI" id="CHEBI:37565"/>
    </ligand>
</feature>
<feature type="binding site" evidence="1">
    <location>
        <begin position="128"/>
        <end position="131"/>
    </location>
    <ligand>
        <name>GTP</name>
        <dbReference type="ChEBI" id="CHEBI:37565"/>
    </ligand>
</feature>